<dbReference type="EC" id="3.6.5.3" evidence="2"/>
<dbReference type="EMBL" id="AE004091">
    <property type="protein sequence ID" value="AAG07653.1"/>
    <property type="molecule type" value="Genomic_DNA"/>
</dbReference>
<dbReference type="EMBL" id="AE004091">
    <property type="protein sequence ID" value="AAG07665.1"/>
    <property type="molecule type" value="Genomic_DNA"/>
</dbReference>
<dbReference type="EMBL" id="X07950">
    <property type="protein sequence ID" value="CAA30775.1"/>
    <property type="molecule type" value="Genomic_DNA"/>
</dbReference>
<dbReference type="PIR" id="F83111">
    <property type="entry name" value="F83111"/>
</dbReference>
<dbReference type="PIR" id="S01222">
    <property type="entry name" value="S01222"/>
</dbReference>
<dbReference type="RefSeq" id="NP_252955.1">
    <property type="nucleotide sequence ID" value="NC_002516.2"/>
</dbReference>
<dbReference type="RefSeq" id="NP_252967.1">
    <property type="nucleotide sequence ID" value="NC_002516.2"/>
</dbReference>
<dbReference type="PDB" id="4ZV4">
    <property type="method" value="X-ray"/>
    <property type="resolution" value="3.50 A"/>
    <property type="chains" value="A/B=1-397"/>
</dbReference>
<dbReference type="PDBsum" id="4ZV4"/>
<dbReference type="SMR" id="P09591"/>
<dbReference type="FunCoup" id="P09591">
    <property type="interactions" value="854"/>
</dbReference>
<dbReference type="IntAct" id="P09591">
    <property type="interactions" value="1"/>
</dbReference>
<dbReference type="MINT" id="P09591"/>
<dbReference type="STRING" id="208964.PA4265"/>
<dbReference type="MoonProt" id="P09591"/>
<dbReference type="PaxDb" id="208964-PA4265"/>
<dbReference type="GeneID" id="881697"/>
<dbReference type="GeneID" id="881718"/>
<dbReference type="KEGG" id="pae:PA4265"/>
<dbReference type="KEGG" id="pae:PA4277"/>
<dbReference type="PATRIC" id="fig|208964.12.peg.4466"/>
<dbReference type="PseudoCAP" id="PA4265"/>
<dbReference type="HOGENOM" id="CLU_007265_0_0_6"/>
<dbReference type="InParanoid" id="P09591"/>
<dbReference type="OrthoDB" id="9803139at2"/>
<dbReference type="PhylomeDB" id="P09591"/>
<dbReference type="Proteomes" id="UP000002438">
    <property type="component" value="Chromosome"/>
</dbReference>
<dbReference type="GO" id="GO:0005737">
    <property type="term" value="C:cytoplasm"/>
    <property type="evidence" value="ECO:0007669"/>
    <property type="project" value="UniProtKB-SubCell"/>
</dbReference>
<dbReference type="GO" id="GO:0005525">
    <property type="term" value="F:GTP binding"/>
    <property type="evidence" value="ECO:0007669"/>
    <property type="project" value="UniProtKB-UniRule"/>
</dbReference>
<dbReference type="GO" id="GO:0003924">
    <property type="term" value="F:GTPase activity"/>
    <property type="evidence" value="ECO:0007669"/>
    <property type="project" value="InterPro"/>
</dbReference>
<dbReference type="GO" id="GO:0097216">
    <property type="term" value="F:guanosine tetraphosphate binding"/>
    <property type="evidence" value="ECO:0007669"/>
    <property type="project" value="UniProtKB-ARBA"/>
</dbReference>
<dbReference type="GO" id="GO:0003746">
    <property type="term" value="F:translation elongation factor activity"/>
    <property type="evidence" value="ECO:0000318"/>
    <property type="project" value="GO_Central"/>
</dbReference>
<dbReference type="GO" id="GO:0006414">
    <property type="term" value="P:translational elongation"/>
    <property type="evidence" value="ECO:0000318"/>
    <property type="project" value="GO_Central"/>
</dbReference>
<dbReference type="CDD" id="cd01884">
    <property type="entry name" value="EF_Tu"/>
    <property type="match status" value="1"/>
</dbReference>
<dbReference type="CDD" id="cd03697">
    <property type="entry name" value="EFTU_II"/>
    <property type="match status" value="1"/>
</dbReference>
<dbReference type="CDD" id="cd03707">
    <property type="entry name" value="EFTU_III"/>
    <property type="match status" value="1"/>
</dbReference>
<dbReference type="FunFam" id="2.40.30.10:FF:000001">
    <property type="entry name" value="Elongation factor Tu"/>
    <property type="match status" value="1"/>
</dbReference>
<dbReference type="FunFam" id="3.40.50.300:FF:000003">
    <property type="entry name" value="Elongation factor Tu"/>
    <property type="match status" value="1"/>
</dbReference>
<dbReference type="Gene3D" id="3.40.50.300">
    <property type="entry name" value="P-loop containing nucleotide triphosphate hydrolases"/>
    <property type="match status" value="1"/>
</dbReference>
<dbReference type="Gene3D" id="2.40.30.10">
    <property type="entry name" value="Translation factors"/>
    <property type="match status" value="2"/>
</dbReference>
<dbReference type="HAMAP" id="MF_00118_B">
    <property type="entry name" value="EF_Tu_B"/>
    <property type="match status" value="1"/>
</dbReference>
<dbReference type="InterPro" id="IPR041709">
    <property type="entry name" value="EF-Tu_GTP-bd"/>
</dbReference>
<dbReference type="InterPro" id="IPR050055">
    <property type="entry name" value="EF-Tu_GTPase"/>
</dbReference>
<dbReference type="InterPro" id="IPR004161">
    <property type="entry name" value="EFTu-like_2"/>
</dbReference>
<dbReference type="InterPro" id="IPR033720">
    <property type="entry name" value="EFTU_2"/>
</dbReference>
<dbReference type="InterPro" id="IPR031157">
    <property type="entry name" value="G_TR_CS"/>
</dbReference>
<dbReference type="InterPro" id="IPR027417">
    <property type="entry name" value="P-loop_NTPase"/>
</dbReference>
<dbReference type="InterPro" id="IPR005225">
    <property type="entry name" value="Small_GTP-bd"/>
</dbReference>
<dbReference type="InterPro" id="IPR000795">
    <property type="entry name" value="T_Tr_GTP-bd_dom"/>
</dbReference>
<dbReference type="InterPro" id="IPR009000">
    <property type="entry name" value="Transl_B-barrel_sf"/>
</dbReference>
<dbReference type="InterPro" id="IPR009001">
    <property type="entry name" value="Transl_elong_EF1A/Init_IF2_C"/>
</dbReference>
<dbReference type="InterPro" id="IPR004541">
    <property type="entry name" value="Transl_elong_EFTu/EF1A_bac/org"/>
</dbReference>
<dbReference type="InterPro" id="IPR004160">
    <property type="entry name" value="Transl_elong_EFTu/EF1A_C"/>
</dbReference>
<dbReference type="NCBIfam" id="TIGR00485">
    <property type="entry name" value="EF-Tu"/>
    <property type="match status" value="1"/>
</dbReference>
<dbReference type="NCBIfam" id="NF000766">
    <property type="entry name" value="PRK00049.1"/>
    <property type="match status" value="1"/>
</dbReference>
<dbReference type="NCBIfam" id="NF009372">
    <property type="entry name" value="PRK12735.1"/>
    <property type="match status" value="1"/>
</dbReference>
<dbReference type="NCBIfam" id="NF009373">
    <property type="entry name" value="PRK12736.1"/>
    <property type="match status" value="1"/>
</dbReference>
<dbReference type="NCBIfam" id="TIGR00231">
    <property type="entry name" value="small_GTP"/>
    <property type="match status" value="1"/>
</dbReference>
<dbReference type="PANTHER" id="PTHR43721:SF22">
    <property type="entry name" value="ELONGATION FACTOR TU, MITOCHONDRIAL"/>
    <property type="match status" value="1"/>
</dbReference>
<dbReference type="PANTHER" id="PTHR43721">
    <property type="entry name" value="ELONGATION FACTOR TU-RELATED"/>
    <property type="match status" value="1"/>
</dbReference>
<dbReference type="Pfam" id="PF00009">
    <property type="entry name" value="GTP_EFTU"/>
    <property type="match status" value="1"/>
</dbReference>
<dbReference type="Pfam" id="PF03144">
    <property type="entry name" value="GTP_EFTU_D2"/>
    <property type="match status" value="1"/>
</dbReference>
<dbReference type="Pfam" id="PF03143">
    <property type="entry name" value="GTP_EFTU_D3"/>
    <property type="match status" value="1"/>
</dbReference>
<dbReference type="PRINTS" id="PR00315">
    <property type="entry name" value="ELONGATNFCT"/>
</dbReference>
<dbReference type="SUPFAM" id="SSF50465">
    <property type="entry name" value="EF-Tu/eEF-1alpha/eIF2-gamma C-terminal domain"/>
    <property type="match status" value="1"/>
</dbReference>
<dbReference type="SUPFAM" id="SSF52540">
    <property type="entry name" value="P-loop containing nucleoside triphosphate hydrolases"/>
    <property type="match status" value="1"/>
</dbReference>
<dbReference type="SUPFAM" id="SSF50447">
    <property type="entry name" value="Translation proteins"/>
    <property type="match status" value="1"/>
</dbReference>
<dbReference type="PROSITE" id="PS00301">
    <property type="entry name" value="G_TR_1"/>
    <property type="match status" value="1"/>
</dbReference>
<dbReference type="PROSITE" id="PS51722">
    <property type="entry name" value="G_TR_2"/>
    <property type="match status" value="1"/>
</dbReference>
<gene>
    <name evidence="2" type="primary">tufA</name>
    <name type="ordered locus">PA4265</name>
</gene>
<gene>
    <name evidence="2" type="primary">tufB</name>
    <name type="ordered locus">PA4277</name>
</gene>
<keyword id="KW-0002">3D-structure</keyword>
<keyword id="KW-0963">Cytoplasm</keyword>
<keyword id="KW-0251">Elongation factor</keyword>
<keyword id="KW-0342">GTP-binding</keyword>
<keyword id="KW-0378">Hydrolase</keyword>
<keyword id="KW-0460">Magnesium</keyword>
<keyword id="KW-0479">Metal-binding</keyword>
<keyword id="KW-0547">Nucleotide-binding</keyword>
<keyword id="KW-0648">Protein biosynthesis</keyword>
<keyword id="KW-1185">Reference proteome</keyword>
<sequence>MAKEKFERNKPHVNVGTIGHVDHGKTTLTAALTKVCSDTWGGSARAFDQIDNAPEEKARGITINTSHVEYDSAVRHYAHVDCPGHADYVKNMITGAAQMDGAILVCSAADGPMPQTREHILLSRQVGVPYIVVFLNKADMVDDAELLELVEMEVRDLLNTYDFPGDDTPIIIGSALMALEGKDDNGIGVSAVQKLVETLDSYIPEPVRAIDQPFLMPIEDVFSISGRGTVVTGRVERGIIKVQEEVEIVGIKATTKTTCTGVEMFRKLLDEGRAGENVGILLRGTKREDVERGQVLAKPGTIKPHTKFECEVYVLSKEEGGRHTPFFKGYRPQFYFRTTDVTGNCELPEGVEMVMPGDNIKMVVTLIAPIAMEDGLRFAIREGGRTVGAGVVAKIIE</sequence>
<evidence type="ECO:0000250" key="1"/>
<evidence type="ECO:0000255" key="2">
    <source>
        <dbReference type="HAMAP-Rule" id="MF_00118"/>
    </source>
</evidence>
<reference key="1">
    <citation type="journal article" date="2000" name="Nature">
        <title>Complete genome sequence of Pseudomonas aeruginosa PAO1, an opportunistic pathogen.</title>
        <authorList>
            <person name="Stover C.K."/>
            <person name="Pham X.-Q.T."/>
            <person name="Erwin A.L."/>
            <person name="Mizoguchi S.D."/>
            <person name="Warrener P."/>
            <person name="Hickey M.J."/>
            <person name="Brinkman F.S.L."/>
            <person name="Hufnagle W.O."/>
            <person name="Kowalik D.J."/>
            <person name="Lagrou M."/>
            <person name="Garber R.L."/>
            <person name="Goltry L."/>
            <person name="Tolentino E."/>
            <person name="Westbrock-Wadman S."/>
            <person name="Yuan Y."/>
            <person name="Brody L.L."/>
            <person name="Coulter S.N."/>
            <person name="Folger K.R."/>
            <person name="Kas A."/>
            <person name="Larbig K."/>
            <person name="Lim R.M."/>
            <person name="Smith K.A."/>
            <person name="Spencer D.H."/>
            <person name="Wong G.K.-S."/>
            <person name="Wu Z."/>
            <person name="Paulsen I.T."/>
            <person name="Reizer J."/>
            <person name="Saier M.H. Jr."/>
            <person name="Hancock R.E.W."/>
            <person name="Lory S."/>
            <person name="Olson M.V."/>
        </authorList>
    </citation>
    <scope>NUCLEOTIDE SEQUENCE [LARGE SCALE GENOMIC DNA]</scope>
    <source>
        <strain>ATCC 15692 / DSM 22644 / CIP 104116 / JCM 14847 / LMG 12228 / 1C / PRS 101 / PAO1</strain>
    </source>
</reference>
<reference key="2">
    <citation type="journal article" date="1988" name="Nucleic Acids Res.">
        <title>A fragment of the Pseudomonas aeruginosa genome contains five tRNA genes, four of which are linked to an EF-Tu gene.</title>
        <authorList>
            <person name="Hughes M.A."/>
            <person name="Jones D.S."/>
        </authorList>
    </citation>
    <scope>NUCLEOTIDE SEQUENCE [GENOMIC DNA] OF 1-12</scope>
</reference>
<organism>
    <name type="scientific">Pseudomonas aeruginosa (strain ATCC 15692 / DSM 22644 / CIP 104116 / JCM 14847 / LMG 12228 / 1C / PRS 101 / PAO1)</name>
    <dbReference type="NCBI Taxonomy" id="208964"/>
    <lineage>
        <taxon>Bacteria</taxon>
        <taxon>Pseudomonadati</taxon>
        <taxon>Pseudomonadota</taxon>
        <taxon>Gammaproteobacteria</taxon>
        <taxon>Pseudomonadales</taxon>
        <taxon>Pseudomonadaceae</taxon>
        <taxon>Pseudomonas</taxon>
    </lineage>
</organism>
<proteinExistence type="evidence at protein level"/>
<comment type="function">
    <text evidence="2">GTP hydrolase that promotes the GTP-dependent binding of aminoacyl-tRNA to the A-site of ribosomes during protein biosynthesis.</text>
</comment>
<comment type="catalytic activity">
    <reaction evidence="2">
        <text>GTP + H2O = GDP + phosphate + H(+)</text>
        <dbReference type="Rhea" id="RHEA:19669"/>
        <dbReference type="ChEBI" id="CHEBI:15377"/>
        <dbReference type="ChEBI" id="CHEBI:15378"/>
        <dbReference type="ChEBI" id="CHEBI:37565"/>
        <dbReference type="ChEBI" id="CHEBI:43474"/>
        <dbReference type="ChEBI" id="CHEBI:58189"/>
        <dbReference type="EC" id="3.6.5.3"/>
    </reaction>
    <physiologicalReaction direction="left-to-right" evidence="2">
        <dbReference type="Rhea" id="RHEA:19670"/>
    </physiologicalReaction>
</comment>
<comment type="subunit">
    <text evidence="2">Monomer.</text>
</comment>
<comment type="subcellular location">
    <subcellularLocation>
        <location evidence="2">Cytoplasm</location>
    </subcellularLocation>
</comment>
<comment type="similarity">
    <text evidence="2">Belongs to the TRAFAC class translation factor GTPase superfamily. Classic translation factor GTPase family. EF-Tu/EF-1A subfamily.</text>
</comment>
<name>EFTU_PSEAE</name>
<feature type="chain" id="PRO_0000091365" description="Elongation factor Tu">
    <location>
        <begin position="1"/>
        <end position="397"/>
    </location>
</feature>
<feature type="domain" description="tr-type G">
    <location>
        <begin position="10"/>
        <end position="207"/>
    </location>
</feature>
<feature type="region of interest" description="G1" evidence="1">
    <location>
        <begin position="19"/>
        <end position="26"/>
    </location>
</feature>
<feature type="region of interest" description="G2" evidence="1">
    <location>
        <begin position="60"/>
        <end position="64"/>
    </location>
</feature>
<feature type="region of interest" description="G3" evidence="1">
    <location>
        <begin position="81"/>
        <end position="84"/>
    </location>
</feature>
<feature type="region of interest" description="G4" evidence="1">
    <location>
        <begin position="136"/>
        <end position="139"/>
    </location>
</feature>
<feature type="region of interest" description="G5" evidence="1">
    <location>
        <begin position="174"/>
        <end position="176"/>
    </location>
</feature>
<feature type="binding site" evidence="2">
    <location>
        <begin position="19"/>
        <end position="26"/>
    </location>
    <ligand>
        <name>GTP</name>
        <dbReference type="ChEBI" id="CHEBI:37565"/>
    </ligand>
</feature>
<feature type="binding site" evidence="2">
    <location>
        <position position="26"/>
    </location>
    <ligand>
        <name>Mg(2+)</name>
        <dbReference type="ChEBI" id="CHEBI:18420"/>
    </ligand>
</feature>
<feature type="binding site" evidence="2">
    <location>
        <begin position="81"/>
        <end position="85"/>
    </location>
    <ligand>
        <name>GTP</name>
        <dbReference type="ChEBI" id="CHEBI:37565"/>
    </ligand>
</feature>
<feature type="binding site" evidence="2">
    <location>
        <begin position="136"/>
        <end position="139"/>
    </location>
    <ligand>
        <name>GTP</name>
        <dbReference type="ChEBI" id="CHEBI:37565"/>
    </ligand>
</feature>
<accession>P09591</accession>
<accession>Q9HWD3</accession>
<protein>
    <recommendedName>
        <fullName evidence="2">Elongation factor Tu</fullName>
        <shortName evidence="2">EF-Tu</shortName>
        <ecNumber evidence="2">3.6.5.3</ecNumber>
    </recommendedName>
</protein>